<reference key="1">
    <citation type="journal article" date="2005" name="Nature">
        <title>The genome of the social amoeba Dictyostelium discoideum.</title>
        <authorList>
            <person name="Eichinger L."/>
            <person name="Pachebat J.A."/>
            <person name="Gloeckner G."/>
            <person name="Rajandream M.A."/>
            <person name="Sucgang R."/>
            <person name="Berriman M."/>
            <person name="Song J."/>
            <person name="Olsen R."/>
            <person name="Szafranski K."/>
            <person name="Xu Q."/>
            <person name="Tunggal B."/>
            <person name="Kummerfeld S."/>
            <person name="Madera M."/>
            <person name="Konfortov B.A."/>
            <person name="Rivero F."/>
            <person name="Bankier A.T."/>
            <person name="Lehmann R."/>
            <person name="Hamlin N."/>
            <person name="Davies R."/>
            <person name="Gaudet P."/>
            <person name="Fey P."/>
            <person name="Pilcher K."/>
            <person name="Chen G."/>
            <person name="Saunders D."/>
            <person name="Sodergren E.J."/>
            <person name="Davis P."/>
            <person name="Kerhornou A."/>
            <person name="Nie X."/>
            <person name="Hall N."/>
            <person name="Anjard C."/>
            <person name="Hemphill L."/>
            <person name="Bason N."/>
            <person name="Farbrother P."/>
            <person name="Desany B."/>
            <person name="Just E."/>
            <person name="Morio T."/>
            <person name="Rost R."/>
            <person name="Churcher C.M."/>
            <person name="Cooper J."/>
            <person name="Haydock S."/>
            <person name="van Driessche N."/>
            <person name="Cronin A."/>
            <person name="Goodhead I."/>
            <person name="Muzny D.M."/>
            <person name="Mourier T."/>
            <person name="Pain A."/>
            <person name="Lu M."/>
            <person name="Harper D."/>
            <person name="Lindsay R."/>
            <person name="Hauser H."/>
            <person name="James K.D."/>
            <person name="Quiles M."/>
            <person name="Madan Babu M."/>
            <person name="Saito T."/>
            <person name="Buchrieser C."/>
            <person name="Wardroper A."/>
            <person name="Felder M."/>
            <person name="Thangavelu M."/>
            <person name="Johnson D."/>
            <person name="Knights A."/>
            <person name="Loulseged H."/>
            <person name="Mungall K.L."/>
            <person name="Oliver K."/>
            <person name="Price C."/>
            <person name="Quail M.A."/>
            <person name="Urushihara H."/>
            <person name="Hernandez J."/>
            <person name="Rabbinowitsch E."/>
            <person name="Steffen D."/>
            <person name="Sanders M."/>
            <person name="Ma J."/>
            <person name="Kohara Y."/>
            <person name="Sharp S."/>
            <person name="Simmonds M.N."/>
            <person name="Spiegler S."/>
            <person name="Tivey A."/>
            <person name="Sugano S."/>
            <person name="White B."/>
            <person name="Walker D."/>
            <person name="Woodward J.R."/>
            <person name="Winckler T."/>
            <person name="Tanaka Y."/>
            <person name="Shaulsky G."/>
            <person name="Schleicher M."/>
            <person name="Weinstock G.M."/>
            <person name="Rosenthal A."/>
            <person name="Cox E.C."/>
            <person name="Chisholm R.L."/>
            <person name="Gibbs R.A."/>
            <person name="Loomis W.F."/>
            <person name="Platzer M."/>
            <person name="Kay R.R."/>
            <person name="Williams J.G."/>
            <person name="Dear P.H."/>
            <person name="Noegel A.A."/>
            <person name="Barrell B.G."/>
            <person name="Kuspa A."/>
        </authorList>
    </citation>
    <scope>NUCLEOTIDE SEQUENCE [LARGE SCALE GENOMIC DNA]</scope>
    <source>
        <strain>AX4</strain>
    </source>
</reference>
<gene>
    <name type="ORF">DDB_G0286949</name>
</gene>
<proteinExistence type="predicted"/>
<organism>
    <name type="scientific">Dictyostelium discoideum</name>
    <name type="common">Social amoeba</name>
    <dbReference type="NCBI Taxonomy" id="44689"/>
    <lineage>
        <taxon>Eukaryota</taxon>
        <taxon>Amoebozoa</taxon>
        <taxon>Evosea</taxon>
        <taxon>Eumycetozoa</taxon>
        <taxon>Dictyostelia</taxon>
        <taxon>Dictyosteliales</taxon>
        <taxon>Dictyosteliaceae</taxon>
        <taxon>Dictyostelium</taxon>
    </lineage>
</organism>
<protein>
    <recommendedName>
        <fullName>Putative uncharacterized protein DDB_G0286949</fullName>
    </recommendedName>
</protein>
<keyword id="KW-1185">Reference proteome</keyword>
<evidence type="ECO:0000256" key="1">
    <source>
        <dbReference type="SAM" id="MobiDB-lite"/>
    </source>
</evidence>
<feature type="chain" id="PRO_0000347044" description="Putative uncharacterized protein DDB_G0286949">
    <location>
        <begin position="1"/>
        <end position="94"/>
    </location>
</feature>
<feature type="region of interest" description="Disordered" evidence="1">
    <location>
        <begin position="33"/>
        <end position="57"/>
    </location>
</feature>
<feature type="compositionally biased region" description="Polar residues" evidence="1">
    <location>
        <begin position="33"/>
        <end position="42"/>
    </location>
</feature>
<feature type="compositionally biased region" description="Low complexity" evidence="1">
    <location>
        <begin position="43"/>
        <end position="57"/>
    </location>
</feature>
<name>Y7206_DICDI</name>
<accession>Q54L22</accession>
<dbReference type="EMBL" id="AAFI02000092">
    <property type="protein sequence ID" value="EAL63972.1"/>
    <property type="molecule type" value="Genomic_DNA"/>
</dbReference>
<dbReference type="RefSeq" id="XP_637481.1">
    <property type="nucleotide sequence ID" value="XM_632389.1"/>
</dbReference>
<dbReference type="PaxDb" id="44689-DDB0187206"/>
<dbReference type="EnsemblProtists" id="EAL63972">
    <property type="protein sequence ID" value="EAL63972"/>
    <property type="gene ID" value="DDB_G0286949"/>
</dbReference>
<dbReference type="GeneID" id="8625880"/>
<dbReference type="KEGG" id="ddi:DDB_G0286949"/>
<dbReference type="dictyBase" id="DDB_G0286949"/>
<dbReference type="VEuPathDB" id="AmoebaDB:DDB_G0286949"/>
<dbReference type="HOGENOM" id="CLU_2390621_0_0_1"/>
<dbReference type="InParanoid" id="Q54L22"/>
<dbReference type="PRO" id="PR:Q54L22"/>
<dbReference type="Proteomes" id="UP000002195">
    <property type="component" value="Chromosome 4"/>
</dbReference>
<sequence>MNRGIRTITRHFNKLNNLNFSSKYTPTFKTTPINSLPTFTKPNDSNNNVNKSSNDGVNNNIITSTIMRTIGFDQFLLCVINDDDDEQTLIYQNF</sequence>